<sequence>MAGAKEIKTKIASVKNTQKITSAMEMVAASKMRRAQERMAASRPYAESMRKVIGHVAQGSLEYKHPYLEVREAKRVGYIVVATDRGLCGGLNVNLFKKVIADVKSWKAQGAEFEFCPIGARSVQFFKNFGGQVSAHASGLGDAPKLADLIGTVGVMLEAYNEGKLDRLYVVFNKFVNTMTQTPVIEQLLPLPKSEDDETAHRWDYIYEPDPKALLDTLLVRYVESQVYQGVVENIASEQAARMVAMKSATDNAGELINDLQLVYNKARQAAITQELSEIVSGASAV</sequence>
<evidence type="ECO:0000255" key="1">
    <source>
        <dbReference type="HAMAP-Rule" id="MF_00815"/>
    </source>
</evidence>
<protein>
    <recommendedName>
        <fullName evidence="1">ATP synthase gamma chain</fullName>
    </recommendedName>
    <alternativeName>
        <fullName evidence="1">ATP synthase F1 sector gamma subunit</fullName>
    </alternativeName>
    <alternativeName>
        <fullName evidence="1">F-ATPase gamma subunit</fullName>
    </alternativeName>
</protein>
<feature type="chain" id="PRO_1000053326" description="ATP synthase gamma chain">
    <location>
        <begin position="1"/>
        <end position="286"/>
    </location>
</feature>
<comment type="function">
    <text evidence="1">Produces ATP from ADP in the presence of a proton gradient across the membrane. The gamma chain is believed to be important in regulating ATPase activity and the flow of protons through the CF(0) complex.</text>
</comment>
<comment type="subunit">
    <text evidence="1">F-type ATPases have 2 components, CF(1) - the catalytic core - and CF(0) - the membrane proton channel. CF(1) has five subunits: alpha(3), beta(3), gamma(1), delta(1), epsilon(1). CF(0) has three main subunits: a, b and c.</text>
</comment>
<comment type="subcellular location">
    <subcellularLocation>
        <location evidence="1">Cell inner membrane</location>
        <topology evidence="1">Peripheral membrane protein</topology>
    </subcellularLocation>
</comment>
<comment type="similarity">
    <text evidence="1">Belongs to the ATPase gamma chain family.</text>
</comment>
<proteinExistence type="inferred from homology"/>
<gene>
    <name evidence="1" type="primary">atpG</name>
    <name type="ordered locus">Shew185_4366</name>
</gene>
<keyword id="KW-0066">ATP synthesis</keyword>
<keyword id="KW-0997">Cell inner membrane</keyword>
<keyword id="KW-1003">Cell membrane</keyword>
<keyword id="KW-0139">CF(1)</keyword>
<keyword id="KW-0375">Hydrogen ion transport</keyword>
<keyword id="KW-0406">Ion transport</keyword>
<keyword id="KW-0472">Membrane</keyword>
<keyword id="KW-0813">Transport</keyword>
<accession>A6WUJ1</accession>
<reference key="1">
    <citation type="submission" date="2007-07" db="EMBL/GenBank/DDBJ databases">
        <title>Complete sequence of chromosome of Shewanella baltica OS185.</title>
        <authorList>
            <consortium name="US DOE Joint Genome Institute"/>
            <person name="Copeland A."/>
            <person name="Lucas S."/>
            <person name="Lapidus A."/>
            <person name="Barry K."/>
            <person name="Glavina del Rio T."/>
            <person name="Dalin E."/>
            <person name="Tice H."/>
            <person name="Pitluck S."/>
            <person name="Sims D."/>
            <person name="Brettin T."/>
            <person name="Bruce D."/>
            <person name="Detter J.C."/>
            <person name="Han C."/>
            <person name="Schmutz J."/>
            <person name="Larimer F."/>
            <person name="Land M."/>
            <person name="Hauser L."/>
            <person name="Kyrpides N."/>
            <person name="Mikhailova N."/>
            <person name="Brettar I."/>
            <person name="Rodrigues J."/>
            <person name="Konstantinidis K."/>
            <person name="Tiedje J."/>
            <person name="Richardson P."/>
        </authorList>
    </citation>
    <scope>NUCLEOTIDE SEQUENCE [LARGE SCALE GENOMIC DNA]</scope>
    <source>
        <strain>OS185</strain>
    </source>
</reference>
<name>ATPG_SHEB8</name>
<organism>
    <name type="scientific">Shewanella baltica (strain OS185)</name>
    <dbReference type="NCBI Taxonomy" id="402882"/>
    <lineage>
        <taxon>Bacteria</taxon>
        <taxon>Pseudomonadati</taxon>
        <taxon>Pseudomonadota</taxon>
        <taxon>Gammaproteobacteria</taxon>
        <taxon>Alteromonadales</taxon>
        <taxon>Shewanellaceae</taxon>
        <taxon>Shewanella</taxon>
    </lineage>
</organism>
<dbReference type="EMBL" id="CP000753">
    <property type="protein sequence ID" value="ABS10480.1"/>
    <property type="molecule type" value="Genomic_DNA"/>
</dbReference>
<dbReference type="RefSeq" id="WP_006084762.1">
    <property type="nucleotide sequence ID" value="NC_009665.1"/>
</dbReference>
<dbReference type="SMR" id="A6WUJ1"/>
<dbReference type="GeneID" id="11774461"/>
<dbReference type="KEGG" id="sbm:Shew185_4366"/>
<dbReference type="HOGENOM" id="CLU_050669_0_1_6"/>
<dbReference type="GO" id="GO:0005886">
    <property type="term" value="C:plasma membrane"/>
    <property type="evidence" value="ECO:0007669"/>
    <property type="project" value="UniProtKB-SubCell"/>
</dbReference>
<dbReference type="GO" id="GO:0045259">
    <property type="term" value="C:proton-transporting ATP synthase complex"/>
    <property type="evidence" value="ECO:0007669"/>
    <property type="project" value="UniProtKB-KW"/>
</dbReference>
<dbReference type="GO" id="GO:0005524">
    <property type="term" value="F:ATP binding"/>
    <property type="evidence" value="ECO:0007669"/>
    <property type="project" value="UniProtKB-UniRule"/>
</dbReference>
<dbReference type="GO" id="GO:0046933">
    <property type="term" value="F:proton-transporting ATP synthase activity, rotational mechanism"/>
    <property type="evidence" value="ECO:0007669"/>
    <property type="project" value="UniProtKB-UniRule"/>
</dbReference>
<dbReference type="GO" id="GO:0042777">
    <property type="term" value="P:proton motive force-driven plasma membrane ATP synthesis"/>
    <property type="evidence" value="ECO:0007669"/>
    <property type="project" value="UniProtKB-UniRule"/>
</dbReference>
<dbReference type="CDD" id="cd12151">
    <property type="entry name" value="F1-ATPase_gamma"/>
    <property type="match status" value="1"/>
</dbReference>
<dbReference type="FunFam" id="1.10.287.80:FF:000005">
    <property type="entry name" value="ATP synthase gamma chain"/>
    <property type="match status" value="2"/>
</dbReference>
<dbReference type="FunFam" id="3.40.1380.10:FF:000001">
    <property type="entry name" value="ATP synthase gamma chain"/>
    <property type="match status" value="1"/>
</dbReference>
<dbReference type="Gene3D" id="3.40.1380.10">
    <property type="match status" value="1"/>
</dbReference>
<dbReference type="Gene3D" id="1.10.287.80">
    <property type="entry name" value="ATP synthase, gamma subunit, helix hairpin domain"/>
    <property type="match status" value="2"/>
</dbReference>
<dbReference type="HAMAP" id="MF_00815">
    <property type="entry name" value="ATP_synth_gamma_bact"/>
    <property type="match status" value="1"/>
</dbReference>
<dbReference type="InterPro" id="IPR035968">
    <property type="entry name" value="ATP_synth_F1_ATPase_gsu"/>
</dbReference>
<dbReference type="InterPro" id="IPR000131">
    <property type="entry name" value="ATP_synth_F1_gsu"/>
</dbReference>
<dbReference type="InterPro" id="IPR023632">
    <property type="entry name" value="ATP_synth_F1_gsu_CS"/>
</dbReference>
<dbReference type="NCBIfam" id="TIGR01146">
    <property type="entry name" value="ATPsyn_F1gamma"/>
    <property type="match status" value="1"/>
</dbReference>
<dbReference type="NCBIfam" id="NF004144">
    <property type="entry name" value="PRK05621.1-1"/>
    <property type="match status" value="1"/>
</dbReference>
<dbReference type="PANTHER" id="PTHR11693">
    <property type="entry name" value="ATP SYNTHASE GAMMA CHAIN"/>
    <property type="match status" value="1"/>
</dbReference>
<dbReference type="PANTHER" id="PTHR11693:SF22">
    <property type="entry name" value="ATP SYNTHASE SUBUNIT GAMMA, MITOCHONDRIAL"/>
    <property type="match status" value="1"/>
</dbReference>
<dbReference type="Pfam" id="PF00231">
    <property type="entry name" value="ATP-synt"/>
    <property type="match status" value="1"/>
</dbReference>
<dbReference type="PRINTS" id="PR00126">
    <property type="entry name" value="ATPASEGAMMA"/>
</dbReference>
<dbReference type="SUPFAM" id="SSF52943">
    <property type="entry name" value="ATP synthase (F1-ATPase), gamma subunit"/>
    <property type="match status" value="1"/>
</dbReference>
<dbReference type="PROSITE" id="PS00153">
    <property type="entry name" value="ATPASE_GAMMA"/>
    <property type="match status" value="1"/>
</dbReference>